<gene>
    <name type="primary">Cbp80</name>
    <name type="ORF">GK25785</name>
</gene>
<evidence type="ECO:0000250" key="1"/>
<evidence type="ECO:0000256" key="2">
    <source>
        <dbReference type="SAM" id="MobiDB-lite"/>
    </source>
</evidence>
<evidence type="ECO:0000305" key="3"/>
<name>NCBP1_DROWI</name>
<keyword id="KW-0506">mRNA capping</keyword>
<keyword id="KW-0507">mRNA processing</keyword>
<keyword id="KW-0508">mRNA splicing</keyword>
<keyword id="KW-0539">Nucleus</keyword>
<keyword id="KW-0597">Phosphoprotein</keyword>
<keyword id="KW-1185">Reference proteome</keyword>
<keyword id="KW-0943">RNA-mediated gene silencing</keyword>
<reference key="1">
    <citation type="journal article" date="2007" name="Nature">
        <title>Evolution of genes and genomes on the Drosophila phylogeny.</title>
        <authorList>
            <consortium name="Drosophila 12 genomes consortium"/>
        </authorList>
    </citation>
    <scope>NUCLEOTIDE SEQUENCE [LARGE SCALE GENOMIC DNA]</scope>
    <source>
        <strain>Tucson 14030-0811.24</strain>
    </source>
</reference>
<feature type="chain" id="PRO_0000385241" description="Nuclear cap-binding protein subunit 1">
    <location>
        <begin position="1"/>
        <end position="800"/>
    </location>
</feature>
<feature type="domain" description="MIF4G">
    <location>
        <begin position="31"/>
        <end position="243"/>
    </location>
</feature>
<feature type="region of interest" description="Disordered" evidence="2">
    <location>
        <begin position="1"/>
        <end position="26"/>
    </location>
</feature>
<feature type="region of interest" description="Disordered" evidence="2">
    <location>
        <begin position="669"/>
        <end position="699"/>
    </location>
</feature>
<feature type="modified residue" description="Phosphothreonine" evidence="1">
    <location>
        <position position="9"/>
    </location>
</feature>
<organism>
    <name type="scientific">Drosophila willistoni</name>
    <name type="common">Fruit fly</name>
    <dbReference type="NCBI Taxonomy" id="7260"/>
    <lineage>
        <taxon>Eukaryota</taxon>
        <taxon>Metazoa</taxon>
        <taxon>Ecdysozoa</taxon>
        <taxon>Arthropoda</taxon>
        <taxon>Hexapoda</taxon>
        <taxon>Insecta</taxon>
        <taxon>Pterygota</taxon>
        <taxon>Neoptera</taxon>
        <taxon>Endopterygota</taxon>
        <taxon>Diptera</taxon>
        <taxon>Brachycera</taxon>
        <taxon>Muscomorpha</taxon>
        <taxon>Ephydroidea</taxon>
        <taxon>Drosophilidae</taxon>
        <taxon>Drosophila</taxon>
        <taxon>Sophophora</taxon>
    </lineage>
</organism>
<protein>
    <recommendedName>
        <fullName>Nuclear cap-binding protein subunit 1</fullName>
    </recommendedName>
    <alternativeName>
        <fullName>80 kDa nuclear cap-binding protein</fullName>
        <shortName>CBP80</shortName>
        <shortName>NCBP 80 kDa subunit</shortName>
    </alternativeName>
</protein>
<proteinExistence type="inferred from homology"/>
<dbReference type="EMBL" id="CH964239">
    <property type="protein sequence ID" value="EDW82400.1"/>
    <property type="molecule type" value="Genomic_DNA"/>
</dbReference>
<dbReference type="SMR" id="B4NC41"/>
<dbReference type="STRING" id="7260.B4NC41"/>
<dbReference type="EnsemblMetazoa" id="FBtr0256436">
    <property type="protein sequence ID" value="FBpp0254928"/>
    <property type="gene ID" value="FBgn0227744"/>
</dbReference>
<dbReference type="EnsemblMetazoa" id="XM_002071378.4">
    <property type="protein sequence ID" value="XP_002071414.1"/>
    <property type="gene ID" value="LOC6648394"/>
</dbReference>
<dbReference type="GeneID" id="6648394"/>
<dbReference type="KEGG" id="dwi:6648394"/>
<dbReference type="CTD" id="44409"/>
<dbReference type="eggNOG" id="KOG1104">
    <property type="taxonomic scope" value="Eukaryota"/>
</dbReference>
<dbReference type="HOGENOM" id="CLU_013207_0_0_1"/>
<dbReference type="OMA" id="CAAEGLM"/>
<dbReference type="OrthoDB" id="10252707at2759"/>
<dbReference type="PhylomeDB" id="B4NC41"/>
<dbReference type="ChiTaRS" id="Cbp80">
    <property type="organism name" value="fly"/>
</dbReference>
<dbReference type="Proteomes" id="UP000007798">
    <property type="component" value="Unassembled WGS sequence"/>
</dbReference>
<dbReference type="GO" id="GO:0005846">
    <property type="term" value="C:nuclear cap binding complex"/>
    <property type="evidence" value="ECO:0007669"/>
    <property type="project" value="InterPro"/>
</dbReference>
<dbReference type="GO" id="GO:0005634">
    <property type="term" value="C:nucleus"/>
    <property type="evidence" value="ECO:0007669"/>
    <property type="project" value="UniProtKB-SubCell"/>
</dbReference>
<dbReference type="GO" id="GO:0099524">
    <property type="term" value="C:postsynaptic cytosol"/>
    <property type="evidence" value="ECO:0007669"/>
    <property type="project" value="EnsemblMetazoa"/>
</dbReference>
<dbReference type="GO" id="GO:0099523">
    <property type="term" value="C:presynaptic cytosol"/>
    <property type="evidence" value="ECO:0007669"/>
    <property type="project" value="EnsemblMetazoa"/>
</dbReference>
<dbReference type="GO" id="GO:0003729">
    <property type="term" value="F:mRNA binding"/>
    <property type="evidence" value="ECO:0007669"/>
    <property type="project" value="TreeGrafter"/>
</dbReference>
<dbReference type="GO" id="GO:0000339">
    <property type="term" value="F:RNA cap binding"/>
    <property type="evidence" value="ECO:0007669"/>
    <property type="project" value="InterPro"/>
</dbReference>
<dbReference type="GO" id="GO:0006370">
    <property type="term" value="P:7-methylguanosine mRNA capping"/>
    <property type="evidence" value="ECO:0007669"/>
    <property type="project" value="UniProtKB-KW"/>
</dbReference>
<dbReference type="GO" id="GO:0006406">
    <property type="term" value="P:mRNA export from nucleus"/>
    <property type="evidence" value="ECO:0007669"/>
    <property type="project" value="InterPro"/>
</dbReference>
<dbReference type="GO" id="GO:0045071">
    <property type="term" value="P:negative regulation of viral genome replication"/>
    <property type="evidence" value="ECO:0007669"/>
    <property type="project" value="EnsemblMetazoa"/>
</dbReference>
<dbReference type="GO" id="GO:0000184">
    <property type="term" value="P:nuclear-transcribed mRNA catabolic process, nonsense-mediated decay"/>
    <property type="evidence" value="ECO:0007669"/>
    <property type="project" value="TreeGrafter"/>
</dbReference>
<dbReference type="GO" id="GO:0031053">
    <property type="term" value="P:primary miRNA processing"/>
    <property type="evidence" value="ECO:0007669"/>
    <property type="project" value="EnsemblMetazoa"/>
</dbReference>
<dbReference type="GO" id="GO:0035194">
    <property type="term" value="P:regulatory ncRNA-mediated post-transcriptional gene silencing"/>
    <property type="evidence" value="ECO:0007669"/>
    <property type="project" value="EnsemblMetazoa"/>
</dbReference>
<dbReference type="GO" id="GO:0008380">
    <property type="term" value="P:RNA splicing"/>
    <property type="evidence" value="ECO:0007669"/>
    <property type="project" value="UniProtKB-KW"/>
</dbReference>
<dbReference type="GO" id="GO:0030422">
    <property type="term" value="P:siRNA processing"/>
    <property type="evidence" value="ECO:0007669"/>
    <property type="project" value="EnsemblMetazoa"/>
</dbReference>
<dbReference type="FunFam" id="1.25.40.180:FF:000010">
    <property type="entry name" value="Nuclear cap-binding protein subunit 1"/>
    <property type="match status" value="1"/>
</dbReference>
<dbReference type="FunFam" id="1.25.40.180:FF:000041">
    <property type="entry name" value="Nuclear cap-binding protein subunit 1"/>
    <property type="match status" value="1"/>
</dbReference>
<dbReference type="Gene3D" id="1.25.40.180">
    <property type="match status" value="3"/>
</dbReference>
<dbReference type="InterPro" id="IPR016024">
    <property type="entry name" value="ARM-type_fold"/>
</dbReference>
<dbReference type="InterPro" id="IPR027159">
    <property type="entry name" value="CBP80"/>
</dbReference>
<dbReference type="InterPro" id="IPR015172">
    <property type="entry name" value="MIF4G-like_typ-1"/>
</dbReference>
<dbReference type="InterPro" id="IPR015174">
    <property type="entry name" value="MIF4G-like_typ-2"/>
</dbReference>
<dbReference type="InterPro" id="IPR003890">
    <property type="entry name" value="MIF4G-like_typ-3"/>
</dbReference>
<dbReference type="PANTHER" id="PTHR12412">
    <property type="entry name" value="CAP BINDING PROTEIN"/>
    <property type="match status" value="1"/>
</dbReference>
<dbReference type="PANTHER" id="PTHR12412:SF2">
    <property type="entry name" value="NUCLEAR CAP-BINDING PROTEIN SUBUNIT 1"/>
    <property type="match status" value="1"/>
</dbReference>
<dbReference type="Pfam" id="PF02854">
    <property type="entry name" value="MIF4G"/>
    <property type="match status" value="1"/>
</dbReference>
<dbReference type="Pfam" id="PF09088">
    <property type="entry name" value="MIF4G_like"/>
    <property type="match status" value="1"/>
</dbReference>
<dbReference type="Pfam" id="PF09090">
    <property type="entry name" value="MIF4G_like_2"/>
    <property type="match status" value="1"/>
</dbReference>
<dbReference type="SMART" id="SM00543">
    <property type="entry name" value="MIF4G"/>
    <property type="match status" value="1"/>
</dbReference>
<dbReference type="SUPFAM" id="SSF48371">
    <property type="entry name" value="ARM repeat"/>
    <property type="match status" value="3"/>
</dbReference>
<comment type="function">
    <text evidence="1">Component of the cap-binding complex (CBC), which binds cotranscriptionally to the 5'-cap of pre-mRNAs and is involved in various processes such as pre-mRNA splicing and RNA-mediated gene silencing (RNAi). The CBC complex is involved in miRNA-mediated RNA interference via its interaction with Ars2 and is required for primary microRNAs (miRNAs) processing. Also involved in innate immunity via the short interfering RNAs (siRNAs) processing machinery by restricting the viral RNA production. In the CBC complex, Cbp80 does not bind directly capped RNAs (m7GpppG-capped RNA) but is required to stabilize the movement of the N-terminal loop of Cbp20 and lock the CBC into a high affinity cap-binding state with the cap structure (By similarity).</text>
</comment>
<comment type="subunit">
    <text evidence="1">Component of the nuclear cap-binding complex (CBC), a heterodimer composed of Cbp80 and Cbp20 that interacts with m7GpppG-capped RNA.</text>
</comment>
<comment type="subcellular location">
    <subcellularLocation>
        <location evidence="1">Nucleus</location>
    </subcellularLocation>
</comment>
<comment type="similarity">
    <text evidence="3">Belongs to the NCBP1 family.</text>
</comment>
<accession>B4NC41</accession>
<sequence length="800" mass="93247">MSRRRAHDTEDEGYDHRRNKRRRVSENQEIEDRLESLILRVGERSTSSVESNLEGLVSVLEADLGTFRLKILRILSDCAVRMPEKCTVYTTLVGLLNAKNYKFGGEFVDHMVKTFKESLKLCRWDAARYSLRFLADLVNCHVISATSLLQLLDTMIDVSNEDTVPQVRRDWFVFAVLSTLPWVGRDLYEKKESALESLLLRIEVYLNKRSKKHHNALRVWSSDAPHPQEEYLDCLWAQIRKLRQDNWAEKHIPRPYLVFDSILCEALQHNLPQIIPPPHHDAFEYPMPWVVYRMFDYTDCPDGPNLPGAHSIERFLIEEHLHHIIETHHYERKDCAAQLLNFPFKHKIPLEYCIVEVIFAELFHMPTPRYLDICYGSILIELCKLQPGTLPQVLAQATEILFMRIDSMNTSCFDRFVNWFSYHLSNFKFTWSWDEWDSCLLLEAEHPRPKFIQEVLQKCLRLSYHQRITEMMPTTYAKLIPLTPVPNYKYANEEAANLPGTTVAHQLVVAIRQKCTPEEVVNILKEIPSSGYSGEEMSDGSFNALKIDVFVQTLLNLGSKSFSHSFAAISKFHAVFRALAETEEAQICILHNIFELWSSHQQMMVVLIDKLLKLQIVDCSAVATWIFSKEMTGEFTKMYLWEILHLTIKKMNKHVIKLNTELSDAKDKLSKADSSSSDSDEDTPHKRKKPITHADKPSEEVVERMEEKLEAANVNQKRLFLIVFQRFIMILSEHLLRSDTDGRDPDTDWYRWTIGRLQQVFLMHHEQVQKYSSTLETLLFTSDLDTHILEVFQQFVALRA</sequence>